<accession>A5U9X0</accession>
<organism>
    <name type="scientific">Haemophilus influenzae (strain PittEE)</name>
    <dbReference type="NCBI Taxonomy" id="374930"/>
    <lineage>
        <taxon>Bacteria</taxon>
        <taxon>Pseudomonadati</taxon>
        <taxon>Pseudomonadota</taxon>
        <taxon>Gammaproteobacteria</taxon>
        <taxon>Pasteurellales</taxon>
        <taxon>Pasteurellaceae</taxon>
        <taxon>Haemophilus</taxon>
    </lineage>
</organism>
<protein>
    <recommendedName>
        <fullName evidence="1">Phosphoglycerate kinase</fullName>
        <ecNumber evidence="1">2.7.2.3</ecNumber>
    </recommendedName>
</protein>
<comment type="catalytic activity">
    <reaction evidence="1">
        <text>(2R)-3-phosphoglycerate + ATP = (2R)-3-phospho-glyceroyl phosphate + ADP</text>
        <dbReference type="Rhea" id="RHEA:14801"/>
        <dbReference type="ChEBI" id="CHEBI:30616"/>
        <dbReference type="ChEBI" id="CHEBI:57604"/>
        <dbReference type="ChEBI" id="CHEBI:58272"/>
        <dbReference type="ChEBI" id="CHEBI:456216"/>
        <dbReference type="EC" id="2.7.2.3"/>
    </reaction>
</comment>
<comment type="pathway">
    <text evidence="1">Carbohydrate degradation; glycolysis; pyruvate from D-glyceraldehyde 3-phosphate: step 2/5.</text>
</comment>
<comment type="subunit">
    <text evidence="1">Monomer.</text>
</comment>
<comment type="subcellular location">
    <subcellularLocation>
        <location evidence="1">Cytoplasm</location>
    </subcellularLocation>
</comment>
<comment type="similarity">
    <text evidence="1">Belongs to the phosphoglycerate kinase family.</text>
</comment>
<reference key="1">
    <citation type="journal article" date="2007" name="Genome Biol.">
        <title>Characterization and modeling of the Haemophilus influenzae core and supragenomes based on the complete genomic sequences of Rd and 12 clinical nontypeable strains.</title>
        <authorList>
            <person name="Hogg J.S."/>
            <person name="Hu F.Z."/>
            <person name="Janto B."/>
            <person name="Boissy R."/>
            <person name="Hayes J."/>
            <person name="Keefe R."/>
            <person name="Post J.C."/>
            <person name="Ehrlich G.D."/>
        </authorList>
    </citation>
    <scope>NUCLEOTIDE SEQUENCE [LARGE SCALE GENOMIC DNA]</scope>
    <source>
        <strain>PittEE</strain>
    </source>
</reference>
<name>PGK_HAEIE</name>
<evidence type="ECO:0000255" key="1">
    <source>
        <dbReference type="HAMAP-Rule" id="MF_00145"/>
    </source>
</evidence>
<sequence>MSVIKMTDLDLAGKRVFIRADLNVPVKDGKVTSDARIRATIPTLKLALEKGAKVMVTSHLGRPTEGEFKPEDSLQPVVDYLKNAGFNVRLEQDYLNGVDVKDGEIVVLENVRVNKGEKKNDPELGKKYAALCDVFVMDAFGTAHRAQASTYGVAEFAPIACAGPLLAAELDALGKALKEPARPMVAIVGGSKVSTKLEVLNSLSKIADQIIVGGGIANTFIAAAGHNVGKSLYEADLIPVAKELAANTDIPVPVDVRVGLEFSETAAATEKAVNEVKDDESIFDIGDKSAEQLAEIIKNAKTVLWNGPVGVFEFPHFRKGTEIISHAIANSDAFSIAGGGDTLAAINLFGIADKISYISTGGGAFLEFVEGKVLPAVEILEKRAKN</sequence>
<proteinExistence type="inferred from homology"/>
<dbReference type="EC" id="2.7.2.3" evidence="1"/>
<dbReference type="EMBL" id="CP000671">
    <property type="protein sequence ID" value="ABQ97571.1"/>
    <property type="molecule type" value="Genomic_DNA"/>
</dbReference>
<dbReference type="SMR" id="A5U9X0"/>
<dbReference type="KEGG" id="hip:CGSHiEE_00365"/>
<dbReference type="HOGENOM" id="CLU_025427_0_2_6"/>
<dbReference type="UniPathway" id="UPA00109">
    <property type="reaction ID" value="UER00185"/>
</dbReference>
<dbReference type="GO" id="GO:0005829">
    <property type="term" value="C:cytosol"/>
    <property type="evidence" value="ECO:0007669"/>
    <property type="project" value="TreeGrafter"/>
</dbReference>
<dbReference type="GO" id="GO:0043531">
    <property type="term" value="F:ADP binding"/>
    <property type="evidence" value="ECO:0007669"/>
    <property type="project" value="TreeGrafter"/>
</dbReference>
<dbReference type="GO" id="GO:0005524">
    <property type="term" value="F:ATP binding"/>
    <property type="evidence" value="ECO:0007669"/>
    <property type="project" value="UniProtKB-KW"/>
</dbReference>
<dbReference type="GO" id="GO:0004618">
    <property type="term" value="F:phosphoglycerate kinase activity"/>
    <property type="evidence" value="ECO:0007669"/>
    <property type="project" value="UniProtKB-UniRule"/>
</dbReference>
<dbReference type="GO" id="GO:0006094">
    <property type="term" value="P:gluconeogenesis"/>
    <property type="evidence" value="ECO:0007669"/>
    <property type="project" value="TreeGrafter"/>
</dbReference>
<dbReference type="GO" id="GO:0006096">
    <property type="term" value="P:glycolytic process"/>
    <property type="evidence" value="ECO:0007669"/>
    <property type="project" value="UniProtKB-UniRule"/>
</dbReference>
<dbReference type="FunFam" id="3.40.50.1260:FF:000001">
    <property type="entry name" value="Phosphoglycerate kinase"/>
    <property type="match status" value="1"/>
</dbReference>
<dbReference type="FunFam" id="3.40.50.1260:FF:000002">
    <property type="entry name" value="Phosphoglycerate kinase"/>
    <property type="match status" value="1"/>
</dbReference>
<dbReference type="Gene3D" id="3.40.50.1260">
    <property type="entry name" value="Phosphoglycerate kinase, N-terminal domain"/>
    <property type="match status" value="2"/>
</dbReference>
<dbReference type="HAMAP" id="MF_00145">
    <property type="entry name" value="Phosphoglyc_kinase"/>
    <property type="match status" value="1"/>
</dbReference>
<dbReference type="InterPro" id="IPR001576">
    <property type="entry name" value="Phosphoglycerate_kinase"/>
</dbReference>
<dbReference type="InterPro" id="IPR015911">
    <property type="entry name" value="Phosphoglycerate_kinase_CS"/>
</dbReference>
<dbReference type="InterPro" id="IPR015824">
    <property type="entry name" value="Phosphoglycerate_kinase_N"/>
</dbReference>
<dbReference type="InterPro" id="IPR036043">
    <property type="entry name" value="Phosphoglycerate_kinase_sf"/>
</dbReference>
<dbReference type="PANTHER" id="PTHR11406">
    <property type="entry name" value="PHOSPHOGLYCERATE KINASE"/>
    <property type="match status" value="1"/>
</dbReference>
<dbReference type="PANTHER" id="PTHR11406:SF23">
    <property type="entry name" value="PHOSPHOGLYCERATE KINASE 1, CHLOROPLASTIC-RELATED"/>
    <property type="match status" value="1"/>
</dbReference>
<dbReference type="Pfam" id="PF00162">
    <property type="entry name" value="PGK"/>
    <property type="match status" value="1"/>
</dbReference>
<dbReference type="PIRSF" id="PIRSF000724">
    <property type="entry name" value="Pgk"/>
    <property type="match status" value="1"/>
</dbReference>
<dbReference type="PRINTS" id="PR00477">
    <property type="entry name" value="PHGLYCKINASE"/>
</dbReference>
<dbReference type="SUPFAM" id="SSF53748">
    <property type="entry name" value="Phosphoglycerate kinase"/>
    <property type="match status" value="1"/>
</dbReference>
<dbReference type="PROSITE" id="PS00111">
    <property type="entry name" value="PGLYCERATE_KINASE"/>
    <property type="match status" value="1"/>
</dbReference>
<feature type="chain" id="PRO_1000058000" description="Phosphoglycerate kinase">
    <location>
        <begin position="1"/>
        <end position="386"/>
    </location>
</feature>
<feature type="binding site" evidence="1">
    <location>
        <begin position="21"/>
        <end position="23"/>
    </location>
    <ligand>
        <name>substrate</name>
    </ligand>
</feature>
<feature type="binding site" evidence="1">
    <location>
        <position position="36"/>
    </location>
    <ligand>
        <name>substrate</name>
    </ligand>
</feature>
<feature type="binding site" evidence="1">
    <location>
        <begin position="59"/>
        <end position="62"/>
    </location>
    <ligand>
        <name>substrate</name>
    </ligand>
</feature>
<feature type="binding site" evidence="1">
    <location>
        <position position="112"/>
    </location>
    <ligand>
        <name>substrate</name>
    </ligand>
</feature>
<feature type="binding site" evidence="1">
    <location>
        <position position="145"/>
    </location>
    <ligand>
        <name>substrate</name>
    </ligand>
</feature>
<feature type="binding site" evidence="1">
    <location>
        <position position="196"/>
    </location>
    <ligand>
        <name>ATP</name>
        <dbReference type="ChEBI" id="CHEBI:30616"/>
    </ligand>
</feature>
<feature type="binding site" evidence="1">
    <location>
        <position position="313"/>
    </location>
    <ligand>
        <name>ATP</name>
        <dbReference type="ChEBI" id="CHEBI:30616"/>
    </ligand>
</feature>
<feature type="binding site" evidence="1">
    <location>
        <begin position="339"/>
        <end position="342"/>
    </location>
    <ligand>
        <name>ATP</name>
        <dbReference type="ChEBI" id="CHEBI:30616"/>
    </ligand>
</feature>
<gene>
    <name evidence="1" type="primary">pgk</name>
    <name type="ordered locus">CGSHiEE_00365</name>
</gene>
<keyword id="KW-0067">ATP-binding</keyword>
<keyword id="KW-0963">Cytoplasm</keyword>
<keyword id="KW-0324">Glycolysis</keyword>
<keyword id="KW-0418">Kinase</keyword>
<keyword id="KW-0547">Nucleotide-binding</keyword>
<keyword id="KW-0808">Transferase</keyword>